<reference key="1">
    <citation type="journal article" date="2003" name="Appl. Microbiol. Biotechnol.">
        <title>The Corynebacterium glutamicum genome: features and impacts on biotechnological processes.</title>
        <authorList>
            <person name="Ikeda M."/>
            <person name="Nakagawa S."/>
        </authorList>
    </citation>
    <scope>NUCLEOTIDE SEQUENCE [LARGE SCALE GENOMIC DNA]</scope>
    <source>
        <strain>ATCC 13032 / DSM 20300 / JCM 1318 / BCRC 11384 / CCUG 27702 / LMG 3730 / NBRC 12168 / NCIMB 10025 / NRRL B-2784 / 534</strain>
    </source>
</reference>
<reference key="2">
    <citation type="journal article" date="2003" name="J. Biotechnol.">
        <title>The complete Corynebacterium glutamicum ATCC 13032 genome sequence and its impact on the production of L-aspartate-derived amino acids and vitamins.</title>
        <authorList>
            <person name="Kalinowski J."/>
            <person name="Bathe B."/>
            <person name="Bartels D."/>
            <person name="Bischoff N."/>
            <person name="Bott M."/>
            <person name="Burkovski A."/>
            <person name="Dusch N."/>
            <person name="Eggeling L."/>
            <person name="Eikmanns B.J."/>
            <person name="Gaigalat L."/>
            <person name="Goesmann A."/>
            <person name="Hartmann M."/>
            <person name="Huthmacher K."/>
            <person name="Kraemer R."/>
            <person name="Linke B."/>
            <person name="McHardy A.C."/>
            <person name="Meyer F."/>
            <person name="Moeckel B."/>
            <person name="Pfefferle W."/>
            <person name="Puehler A."/>
            <person name="Rey D.A."/>
            <person name="Rueckert C."/>
            <person name="Rupp O."/>
            <person name="Sahm H."/>
            <person name="Wendisch V.F."/>
            <person name="Wiegraebe I."/>
            <person name="Tauch A."/>
        </authorList>
    </citation>
    <scope>NUCLEOTIDE SEQUENCE [LARGE SCALE GENOMIC DNA]</scope>
    <source>
        <strain>ATCC 13032 / DSM 20300 / JCM 1318 / BCRC 11384 / CCUG 27702 / LMG 3730 / NBRC 12168 / NCIMB 10025 / NRRL B-2784 / 534</strain>
    </source>
</reference>
<protein>
    <recommendedName>
        <fullName evidence="1">Orotidine 5'-phosphate decarboxylase</fullName>
        <ecNumber evidence="1">4.1.1.23</ecNumber>
    </recommendedName>
    <alternativeName>
        <fullName evidence="1">OMP decarboxylase</fullName>
        <shortName evidence="1">OMPDCase</shortName>
        <shortName evidence="1">OMPdecase</shortName>
    </alternativeName>
</protein>
<sequence>MTFGEKLLNAASTRGRLCVGIDPHESLLTSWGLPVNVDGLAEFSRACVEAFADTVALVKPQVAFYERFGSAGFAILEETIQTLRERGCLVVSDAKRGDIGSTMAGYASAWLDPASPLSSDAVTVSPYLGFHSLDPVFELAEQHGRGVFVLAATSNPEARELQDQQNADGVSISQQIVDQAAALNAPYMAQGKAGNIGVVIGATLSKPPRLSTLGGAILMPGVGAQGGTASDVDEIAGDMAHLAFPNVSRSILATGPDIAEMKNSVAKNAADFPGFPRS</sequence>
<feature type="chain" id="PRO_0000134625" description="Orotidine 5'-phosphate decarboxylase">
    <location>
        <begin position="1"/>
        <end position="278"/>
    </location>
</feature>
<feature type="active site" description="Proton donor" evidence="1">
    <location>
        <position position="95"/>
    </location>
</feature>
<accession>Q8NQ40</accession>
<evidence type="ECO:0000255" key="1">
    <source>
        <dbReference type="HAMAP-Rule" id="MF_01215"/>
    </source>
</evidence>
<organism>
    <name type="scientific">Corynebacterium glutamicum (strain ATCC 13032 / DSM 20300 / JCM 1318 / BCRC 11384 / CCUG 27702 / LMG 3730 / NBRC 12168 / NCIMB 10025 / NRRL B-2784 / 534)</name>
    <dbReference type="NCBI Taxonomy" id="196627"/>
    <lineage>
        <taxon>Bacteria</taxon>
        <taxon>Bacillati</taxon>
        <taxon>Actinomycetota</taxon>
        <taxon>Actinomycetes</taxon>
        <taxon>Mycobacteriales</taxon>
        <taxon>Corynebacteriaceae</taxon>
        <taxon>Corynebacterium</taxon>
    </lineage>
</organism>
<name>PYRF_CORGL</name>
<keyword id="KW-0210">Decarboxylase</keyword>
<keyword id="KW-0456">Lyase</keyword>
<keyword id="KW-0665">Pyrimidine biosynthesis</keyword>
<keyword id="KW-1185">Reference proteome</keyword>
<dbReference type="EC" id="4.1.1.23" evidence="1"/>
<dbReference type="EMBL" id="BA000036">
    <property type="protein sequence ID" value="BAB99001.1"/>
    <property type="molecule type" value="Genomic_DNA"/>
</dbReference>
<dbReference type="EMBL" id="BX927152">
    <property type="protein sequence ID" value="CAF21617.1"/>
    <property type="molecule type" value="Genomic_DNA"/>
</dbReference>
<dbReference type="RefSeq" id="NP_600822.1">
    <property type="nucleotide sequence ID" value="NC_003450.3"/>
</dbReference>
<dbReference type="RefSeq" id="WP_011014477.1">
    <property type="nucleotide sequence ID" value="NC_006958.1"/>
</dbReference>
<dbReference type="SMR" id="Q8NQ40"/>
<dbReference type="STRING" id="196627.cg1812"/>
<dbReference type="DNASU" id="3342821"/>
<dbReference type="GeneID" id="1019576"/>
<dbReference type="KEGG" id="cgb:cg1812"/>
<dbReference type="KEGG" id="cgl:Cgl1608"/>
<dbReference type="PATRIC" id="fig|196627.13.peg.1570"/>
<dbReference type="eggNOG" id="COG0284">
    <property type="taxonomic scope" value="Bacteria"/>
</dbReference>
<dbReference type="HOGENOM" id="CLU_060704_0_0_11"/>
<dbReference type="OrthoDB" id="9808470at2"/>
<dbReference type="BioCyc" id="CORYNE:G18NG-11193-MONOMER"/>
<dbReference type="UniPathway" id="UPA00070">
    <property type="reaction ID" value="UER00120"/>
</dbReference>
<dbReference type="Proteomes" id="UP000000582">
    <property type="component" value="Chromosome"/>
</dbReference>
<dbReference type="Proteomes" id="UP000001009">
    <property type="component" value="Chromosome"/>
</dbReference>
<dbReference type="GO" id="GO:0004590">
    <property type="term" value="F:orotidine-5'-phosphate decarboxylase activity"/>
    <property type="evidence" value="ECO:0007669"/>
    <property type="project" value="UniProtKB-UniRule"/>
</dbReference>
<dbReference type="GO" id="GO:0006207">
    <property type="term" value="P:'de novo' pyrimidine nucleobase biosynthetic process"/>
    <property type="evidence" value="ECO:0007669"/>
    <property type="project" value="InterPro"/>
</dbReference>
<dbReference type="GO" id="GO:0044205">
    <property type="term" value="P:'de novo' UMP biosynthetic process"/>
    <property type="evidence" value="ECO:0007669"/>
    <property type="project" value="UniProtKB-UniRule"/>
</dbReference>
<dbReference type="CDD" id="cd04725">
    <property type="entry name" value="OMP_decarboxylase_like"/>
    <property type="match status" value="1"/>
</dbReference>
<dbReference type="Gene3D" id="3.20.20.70">
    <property type="entry name" value="Aldolase class I"/>
    <property type="match status" value="1"/>
</dbReference>
<dbReference type="HAMAP" id="MF_01215">
    <property type="entry name" value="OMPdecase_type2"/>
    <property type="match status" value="1"/>
</dbReference>
<dbReference type="InterPro" id="IPR013785">
    <property type="entry name" value="Aldolase_TIM"/>
</dbReference>
<dbReference type="InterPro" id="IPR018089">
    <property type="entry name" value="OMPdecase_AS"/>
</dbReference>
<dbReference type="InterPro" id="IPR011995">
    <property type="entry name" value="OMPdecase_type-2"/>
</dbReference>
<dbReference type="InterPro" id="IPR001754">
    <property type="entry name" value="OMPdeCOase_dom"/>
</dbReference>
<dbReference type="InterPro" id="IPR011060">
    <property type="entry name" value="RibuloseP-bd_barrel"/>
</dbReference>
<dbReference type="NCBIfam" id="TIGR02127">
    <property type="entry name" value="pyrF_sub2"/>
    <property type="match status" value="1"/>
</dbReference>
<dbReference type="PANTHER" id="PTHR43375">
    <property type="entry name" value="OROTIDINE 5'-PHOSPHATE DECARBOXYLASE"/>
    <property type="match status" value="1"/>
</dbReference>
<dbReference type="PANTHER" id="PTHR43375:SF1">
    <property type="entry name" value="OROTIDINE 5'-PHOSPHATE DECARBOXYLASE"/>
    <property type="match status" value="1"/>
</dbReference>
<dbReference type="Pfam" id="PF00215">
    <property type="entry name" value="OMPdecase"/>
    <property type="match status" value="1"/>
</dbReference>
<dbReference type="SMART" id="SM00934">
    <property type="entry name" value="OMPdecase"/>
    <property type="match status" value="1"/>
</dbReference>
<dbReference type="SUPFAM" id="SSF51366">
    <property type="entry name" value="Ribulose-phoshate binding barrel"/>
    <property type="match status" value="1"/>
</dbReference>
<dbReference type="PROSITE" id="PS00156">
    <property type="entry name" value="OMPDECASE"/>
    <property type="match status" value="1"/>
</dbReference>
<gene>
    <name evidence="1" type="primary">pyrF</name>
    <name type="ordered locus">Cgl1608</name>
    <name type="ordered locus">cg1812</name>
</gene>
<comment type="catalytic activity">
    <reaction evidence="1">
        <text>orotidine 5'-phosphate + H(+) = UMP + CO2</text>
        <dbReference type="Rhea" id="RHEA:11596"/>
        <dbReference type="ChEBI" id="CHEBI:15378"/>
        <dbReference type="ChEBI" id="CHEBI:16526"/>
        <dbReference type="ChEBI" id="CHEBI:57538"/>
        <dbReference type="ChEBI" id="CHEBI:57865"/>
        <dbReference type="EC" id="4.1.1.23"/>
    </reaction>
</comment>
<comment type="pathway">
    <text evidence="1">Pyrimidine metabolism; UMP biosynthesis via de novo pathway; UMP from orotate: step 2/2.</text>
</comment>
<comment type="similarity">
    <text evidence="1">Belongs to the OMP decarboxylase family. Type 2 subfamily.</text>
</comment>
<proteinExistence type="inferred from homology"/>